<reference key="1">
    <citation type="journal article" date="2011" name="J. Bacteriol.">
        <title>Comparative genomics of 28 Salmonella enterica isolates: evidence for CRISPR-mediated adaptive sublineage evolution.</title>
        <authorList>
            <person name="Fricke W.F."/>
            <person name="Mammel M.K."/>
            <person name="McDermott P.F."/>
            <person name="Tartera C."/>
            <person name="White D.G."/>
            <person name="Leclerc J.E."/>
            <person name="Ravel J."/>
            <person name="Cebula T.A."/>
        </authorList>
    </citation>
    <scope>NUCLEOTIDE SEQUENCE [LARGE SCALE GENOMIC DNA]</scope>
    <source>
        <strain>SL483</strain>
    </source>
</reference>
<gene>
    <name evidence="1" type="primary">ruvB</name>
    <name type="ordered locus">SeAg_B1230</name>
</gene>
<keyword id="KW-0067">ATP-binding</keyword>
<keyword id="KW-0963">Cytoplasm</keyword>
<keyword id="KW-0227">DNA damage</keyword>
<keyword id="KW-0233">DNA recombination</keyword>
<keyword id="KW-0234">DNA repair</keyword>
<keyword id="KW-0238">DNA-binding</keyword>
<keyword id="KW-0378">Hydrolase</keyword>
<keyword id="KW-0547">Nucleotide-binding</keyword>
<comment type="function">
    <text evidence="1">The RuvA-RuvB-RuvC complex processes Holliday junction (HJ) DNA during genetic recombination and DNA repair, while the RuvA-RuvB complex plays an important role in the rescue of blocked DNA replication forks via replication fork reversal (RFR). RuvA specifically binds to HJ cruciform DNA, conferring on it an open structure. The RuvB hexamer acts as an ATP-dependent pump, pulling dsDNA into and through the RuvAB complex. RuvB forms 2 homohexamers on either side of HJ DNA bound by 1 or 2 RuvA tetramers; 4 subunits per hexamer contact DNA at a time. Coordinated motions by a converter formed by DNA-disengaged RuvB subunits stimulates ATP hydrolysis and nucleotide exchange. Immobilization of the converter enables RuvB to convert the ATP-contained energy into a lever motion, pulling 2 nucleotides of DNA out of the RuvA tetramer per ATP hydrolyzed, thus driving DNA branch migration. The RuvB motors rotate together with the DNA substrate, which together with the progressing nucleotide cycle form the mechanistic basis for DNA recombination by continuous HJ branch migration. Branch migration allows RuvC to scan DNA until it finds its consensus sequence, where it cleaves and resolves cruciform DNA.</text>
</comment>
<comment type="catalytic activity">
    <reaction evidence="1">
        <text>ATP + H2O = ADP + phosphate + H(+)</text>
        <dbReference type="Rhea" id="RHEA:13065"/>
        <dbReference type="ChEBI" id="CHEBI:15377"/>
        <dbReference type="ChEBI" id="CHEBI:15378"/>
        <dbReference type="ChEBI" id="CHEBI:30616"/>
        <dbReference type="ChEBI" id="CHEBI:43474"/>
        <dbReference type="ChEBI" id="CHEBI:456216"/>
    </reaction>
</comment>
<comment type="subunit">
    <text evidence="1">Homohexamer. Forms an RuvA(8)-RuvB(12)-Holliday junction (HJ) complex. HJ DNA is sandwiched between 2 RuvA tetramers; dsDNA enters through RuvA and exits via RuvB. An RuvB hexamer assembles on each DNA strand where it exits the tetramer. Each RuvB hexamer is contacted by two RuvA subunits (via domain III) on 2 adjacent RuvB subunits; this complex drives branch migration. In the full resolvosome a probable DNA-RuvA(4)-RuvB(12)-RuvC(2) complex forms which resolves the HJ.</text>
</comment>
<comment type="subcellular location">
    <subcellularLocation>
        <location evidence="1">Cytoplasm</location>
    </subcellularLocation>
</comment>
<comment type="domain">
    <text evidence="1">Has 3 domains, the large (RuvB-L) and small ATPase (RuvB-S) domains and the C-terminal head (RuvB-H) domain. The head domain binds DNA, while the ATPase domains jointly bind ATP, ADP or are empty depending on the state of the subunit in the translocation cycle. During a single DNA translocation step the structure of each domain remains the same, but their relative positions change.</text>
</comment>
<comment type="similarity">
    <text evidence="1">Belongs to the RuvB family.</text>
</comment>
<accession>B5F3J7</accession>
<protein>
    <recommendedName>
        <fullName evidence="1">Holliday junction branch migration complex subunit RuvB</fullName>
        <ecNumber evidence="1">3.6.4.-</ecNumber>
    </recommendedName>
</protein>
<evidence type="ECO:0000255" key="1">
    <source>
        <dbReference type="HAMAP-Rule" id="MF_00016"/>
    </source>
</evidence>
<proteinExistence type="inferred from homology"/>
<dbReference type="EC" id="3.6.4.-" evidence="1"/>
<dbReference type="EMBL" id="CP001138">
    <property type="protein sequence ID" value="ACH48707.1"/>
    <property type="molecule type" value="Genomic_DNA"/>
</dbReference>
<dbReference type="RefSeq" id="WP_000568508.1">
    <property type="nucleotide sequence ID" value="NC_011149.1"/>
</dbReference>
<dbReference type="SMR" id="B5F3J7"/>
<dbReference type="KEGG" id="sea:SeAg_B1230"/>
<dbReference type="HOGENOM" id="CLU_055599_1_0_6"/>
<dbReference type="Proteomes" id="UP000008819">
    <property type="component" value="Chromosome"/>
</dbReference>
<dbReference type="GO" id="GO:0005737">
    <property type="term" value="C:cytoplasm"/>
    <property type="evidence" value="ECO:0007669"/>
    <property type="project" value="UniProtKB-SubCell"/>
</dbReference>
<dbReference type="GO" id="GO:0048476">
    <property type="term" value="C:Holliday junction resolvase complex"/>
    <property type="evidence" value="ECO:0007669"/>
    <property type="project" value="UniProtKB-UniRule"/>
</dbReference>
<dbReference type="GO" id="GO:0005524">
    <property type="term" value="F:ATP binding"/>
    <property type="evidence" value="ECO:0007669"/>
    <property type="project" value="UniProtKB-UniRule"/>
</dbReference>
<dbReference type="GO" id="GO:0016887">
    <property type="term" value="F:ATP hydrolysis activity"/>
    <property type="evidence" value="ECO:0007669"/>
    <property type="project" value="InterPro"/>
</dbReference>
<dbReference type="GO" id="GO:0000400">
    <property type="term" value="F:four-way junction DNA binding"/>
    <property type="evidence" value="ECO:0007669"/>
    <property type="project" value="UniProtKB-UniRule"/>
</dbReference>
<dbReference type="GO" id="GO:0009378">
    <property type="term" value="F:four-way junction helicase activity"/>
    <property type="evidence" value="ECO:0007669"/>
    <property type="project" value="InterPro"/>
</dbReference>
<dbReference type="GO" id="GO:0006310">
    <property type="term" value="P:DNA recombination"/>
    <property type="evidence" value="ECO:0007669"/>
    <property type="project" value="UniProtKB-UniRule"/>
</dbReference>
<dbReference type="GO" id="GO:0006281">
    <property type="term" value="P:DNA repair"/>
    <property type="evidence" value="ECO:0007669"/>
    <property type="project" value="UniProtKB-UniRule"/>
</dbReference>
<dbReference type="CDD" id="cd00009">
    <property type="entry name" value="AAA"/>
    <property type="match status" value="1"/>
</dbReference>
<dbReference type="FunFam" id="1.10.10.10:FF:000086">
    <property type="entry name" value="Holliday junction ATP-dependent DNA helicase RuvB"/>
    <property type="match status" value="1"/>
</dbReference>
<dbReference type="FunFam" id="1.10.8.60:FF:000023">
    <property type="entry name" value="Holliday junction ATP-dependent DNA helicase RuvB"/>
    <property type="match status" value="1"/>
</dbReference>
<dbReference type="FunFam" id="3.40.50.300:FF:000073">
    <property type="entry name" value="Holliday junction ATP-dependent DNA helicase RuvB"/>
    <property type="match status" value="1"/>
</dbReference>
<dbReference type="Gene3D" id="1.10.8.60">
    <property type="match status" value="1"/>
</dbReference>
<dbReference type="Gene3D" id="3.40.50.300">
    <property type="entry name" value="P-loop containing nucleotide triphosphate hydrolases"/>
    <property type="match status" value="1"/>
</dbReference>
<dbReference type="Gene3D" id="1.10.10.10">
    <property type="entry name" value="Winged helix-like DNA-binding domain superfamily/Winged helix DNA-binding domain"/>
    <property type="match status" value="1"/>
</dbReference>
<dbReference type="HAMAP" id="MF_00016">
    <property type="entry name" value="DNA_HJ_migration_RuvB"/>
    <property type="match status" value="1"/>
</dbReference>
<dbReference type="InterPro" id="IPR003593">
    <property type="entry name" value="AAA+_ATPase"/>
</dbReference>
<dbReference type="InterPro" id="IPR041445">
    <property type="entry name" value="AAA_lid_4"/>
</dbReference>
<dbReference type="InterPro" id="IPR004605">
    <property type="entry name" value="DNA_helicase_Holl-junc_RuvB"/>
</dbReference>
<dbReference type="InterPro" id="IPR027417">
    <property type="entry name" value="P-loop_NTPase"/>
</dbReference>
<dbReference type="InterPro" id="IPR008824">
    <property type="entry name" value="RuvB-like_N"/>
</dbReference>
<dbReference type="InterPro" id="IPR008823">
    <property type="entry name" value="RuvB_C"/>
</dbReference>
<dbReference type="InterPro" id="IPR036388">
    <property type="entry name" value="WH-like_DNA-bd_sf"/>
</dbReference>
<dbReference type="InterPro" id="IPR036390">
    <property type="entry name" value="WH_DNA-bd_sf"/>
</dbReference>
<dbReference type="NCBIfam" id="NF000868">
    <property type="entry name" value="PRK00080.1"/>
    <property type="match status" value="1"/>
</dbReference>
<dbReference type="NCBIfam" id="TIGR00635">
    <property type="entry name" value="ruvB"/>
    <property type="match status" value="1"/>
</dbReference>
<dbReference type="PANTHER" id="PTHR42848">
    <property type="match status" value="1"/>
</dbReference>
<dbReference type="PANTHER" id="PTHR42848:SF1">
    <property type="entry name" value="HOLLIDAY JUNCTION BRANCH MIGRATION COMPLEX SUBUNIT RUVB"/>
    <property type="match status" value="1"/>
</dbReference>
<dbReference type="Pfam" id="PF17864">
    <property type="entry name" value="AAA_lid_4"/>
    <property type="match status" value="1"/>
</dbReference>
<dbReference type="Pfam" id="PF05491">
    <property type="entry name" value="RuvB_C"/>
    <property type="match status" value="1"/>
</dbReference>
<dbReference type="Pfam" id="PF05496">
    <property type="entry name" value="RuvB_N"/>
    <property type="match status" value="1"/>
</dbReference>
<dbReference type="SMART" id="SM00382">
    <property type="entry name" value="AAA"/>
    <property type="match status" value="1"/>
</dbReference>
<dbReference type="SUPFAM" id="SSF52540">
    <property type="entry name" value="P-loop containing nucleoside triphosphate hydrolases"/>
    <property type="match status" value="1"/>
</dbReference>
<dbReference type="SUPFAM" id="SSF46785">
    <property type="entry name" value="Winged helix' DNA-binding domain"/>
    <property type="match status" value="1"/>
</dbReference>
<feature type="chain" id="PRO_1000089671" description="Holliday junction branch migration complex subunit RuvB">
    <location>
        <begin position="1"/>
        <end position="336"/>
    </location>
</feature>
<feature type="region of interest" description="Large ATPase domain (RuvB-L)" evidence="1">
    <location>
        <begin position="4"/>
        <end position="184"/>
    </location>
</feature>
<feature type="region of interest" description="Small ATPAse domain (RuvB-S)" evidence="1">
    <location>
        <begin position="185"/>
        <end position="255"/>
    </location>
</feature>
<feature type="region of interest" description="Head domain (RuvB-H)" evidence="1">
    <location>
        <begin position="258"/>
        <end position="336"/>
    </location>
</feature>
<feature type="binding site" evidence="1">
    <location>
        <position position="23"/>
    </location>
    <ligand>
        <name>ATP</name>
        <dbReference type="ChEBI" id="CHEBI:30616"/>
    </ligand>
</feature>
<feature type="binding site" evidence="1">
    <location>
        <position position="24"/>
    </location>
    <ligand>
        <name>ATP</name>
        <dbReference type="ChEBI" id="CHEBI:30616"/>
    </ligand>
</feature>
<feature type="binding site" evidence="1">
    <location>
        <position position="65"/>
    </location>
    <ligand>
        <name>ATP</name>
        <dbReference type="ChEBI" id="CHEBI:30616"/>
    </ligand>
</feature>
<feature type="binding site" evidence="1">
    <location>
        <position position="68"/>
    </location>
    <ligand>
        <name>ATP</name>
        <dbReference type="ChEBI" id="CHEBI:30616"/>
    </ligand>
</feature>
<feature type="binding site" evidence="1">
    <location>
        <position position="69"/>
    </location>
    <ligand>
        <name>ATP</name>
        <dbReference type="ChEBI" id="CHEBI:30616"/>
    </ligand>
</feature>
<feature type="binding site" evidence="1">
    <location>
        <position position="69"/>
    </location>
    <ligand>
        <name>Mg(2+)</name>
        <dbReference type="ChEBI" id="CHEBI:18420"/>
    </ligand>
</feature>
<feature type="binding site" evidence="1">
    <location>
        <position position="70"/>
    </location>
    <ligand>
        <name>ATP</name>
        <dbReference type="ChEBI" id="CHEBI:30616"/>
    </ligand>
</feature>
<feature type="binding site" evidence="1">
    <location>
        <begin position="131"/>
        <end position="133"/>
    </location>
    <ligand>
        <name>ATP</name>
        <dbReference type="ChEBI" id="CHEBI:30616"/>
    </ligand>
</feature>
<feature type="binding site" evidence="1">
    <location>
        <position position="174"/>
    </location>
    <ligand>
        <name>ATP</name>
        <dbReference type="ChEBI" id="CHEBI:30616"/>
    </ligand>
</feature>
<feature type="binding site" evidence="1">
    <location>
        <position position="184"/>
    </location>
    <ligand>
        <name>ATP</name>
        <dbReference type="ChEBI" id="CHEBI:30616"/>
    </ligand>
</feature>
<feature type="binding site" evidence="1">
    <location>
        <position position="221"/>
    </location>
    <ligand>
        <name>ATP</name>
        <dbReference type="ChEBI" id="CHEBI:30616"/>
    </ligand>
</feature>
<feature type="binding site" evidence="1">
    <location>
        <position position="294"/>
    </location>
    <ligand>
        <name>DNA</name>
        <dbReference type="ChEBI" id="CHEBI:16991"/>
    </ligand>
</feature>
<feature type="binding site" evidence="1">
    <location>
        <position position="313"/>
    </location>
    <ligand>
        <name>DNA</name>
        <dbReference type="ChEBI" id="CHEBI:16991"/>
    </ligand>
</feature>
<feature type="binding site" evidence="1">
    <location>
        <position position="318"/>
    </location>
    <ligand>
        <name>DNA</name>
        <dbReference type="ChEBI" id="CHEBI:16991"/>
    </ligand>
</feature>
<name>RUVB_SALA4</name>
<sequence length="336" mass="37019">MIEADRLISAGATIAEDVADRAIRPKLLAEYVGQPQVRSQMEIFIQAAKRRGDALDHLLIFGPPGLGKTTLANIVANEMGVNLRTTSGPVLEKAGDLAAMLTNLEPHDVLFIDEIHRLSPVVEEVLYPAMEDYQLDIMIGEGPAARSIKIDLPPFTLIGATTRAGSLTSPLRDRFGIVQRLEFYQVPDLQHIVGRSARHMGLEMSDDGALEVARRARGTPRIANRLLRRVRDFAEVKHDGAISAEIAAQALDMLNVDAEGFDYMDRKLLLAVIDKFFGGPVGLDNLAAAIGEERETIEDVLEPYLIQQGFLQRTPRGRMATVRAWNHFGITPPEMP</sequence>
<organism>
    <name type="scientific">Salmonella agona (strain SL483)</name>
    <dbReference type="NCBI Taxonomy" id="454166"/>
    <lineage>
        <taxon>Bacteria</taxon>
        <taxon>Pseudomonadati</taxon>
        <taxon>Pseudomonadota</taxon>
        <taxon>Gammaproteobacteria</taxon>
        <taxon>Enterobacterales</taxon>
        <taxon>Enterobacteriaceae</taxon>
        <taxon>Salmonella</taxon>
    </lineage>
</organism>